<comment type="subcellular location">
    <subcellularLocation>
        <location evidence="1">Cell inner membrane</location>
        <topology evidence="1">Multi-pass membrane protein</topology>
    </subcellularLocation>
</comment>
<comment type="similarity">
    <text evidence="1">Belongs to the UPF0060 family.</text>
</comment>
<accession>Q7NSE1</accession>
<proteinExistence type="inferred from homology"/>
<sequence length="113" mass="12222">MEWLTGLPRVAGLFVLTALAEIVGCYLPWLVLREGRSLWLLAPTTLALALFAWLLTLHPAAAGRTYAAYGGVYVTVAIAWLWLVDGVRPDRWDALGCALALAGMAVIMLAPRS</sequence>
<keyword id="KW-0997">Cell inner membrane</keyword>
<keyword id="KW-1003">Cell membrane</keyword>
<keyword id="KW-0472">Membrane</keyword>
<keyword id="KW-1185">Reference proteome</keyword>
<keyword id="KW-0812">Transmembrane</keyword>
<keyword id="KW-1133">Transmembrane helix</keyword>
<reference key="1">
    <citation type="journal article" date="2003" name="Proc. Natl. Acad. Sci. U.S.A.">
        <title>The complete genome sequence of Chromobacterium violaceum reveals remarkable and exploitable bacterial adaptability.</title>
        <authorList>
            <person name="Vasconcelos A.T.R."/>
            <person name="de Almeida D.F."/>
            <person name="Hungria M."/>
            <person name="Guimaraes C.T."/>
            <person name="Antonio R.V."/>
            <person name="Almeida F.C."/>
            <person name="de Almeida L.G.P."/>
            <person name="de Almeida R."/>
            <person name="Alves-Gomes J.A."/>
            <person name="Andrade E.M."/>
            <person name="Araripe J."/>
            <person name="de Araujo M.F.F."/>
            <person name="Astolfi-Filho S."/>
            <person name="Azevedo V."/>
            <person name="Baptista A.J."/>
            <person name="Bataus L.A.M."/>
            <person name="Batista J.S."/>
            <person name="Belo A."/>
            <person name="van den Berg C."/>
            <person name="Bogo M."/>
            <person name="Bonatto S."/>
            <person name="Bordignon J."/>
            <person name="Brigido M.M."/>
            <person name="Brito C.A."/>
            <person name="Brocchi M."/>
            <person name="Burity H.A."/>
            <person name="Camargo A.A."/>
            <person name="Cardoso D.D.P."/>
            <person name="Carneiro N.P."/>
            <person name="Carraro D.M."/>
            <person name="Carvalho C.M.B."/>
            <person name="Cascardo J.C.M."/>
            <person name="Cavada B.S."/>
            <person name="Chueire L.M.O."/>
            <person name="Creczynski-Pasa T.B."/>
            <person name="Cunha-Junior N.C."/>
            <person name="Fagundes N."/>
            <person name="Falcao C.L."/>
            <person name="Fantinatti F."/>
            <person name="Farias I.P."/>
            <person name="Felipe M.S.S."/>
            <person name="Ferrari L.P."/>
            <person name="Ferro J.A."/>
            <person name="Ferro M.I.T."/>
            <person name="Franco G.R."/>
            <person name="Freitas N.S.A."/>
            <person name="Furlan L.R."/>
            <person name="Gazzinelli R.T."/>
            <person name="Gomes E.A."/>
            <person name="Goncalves P.R."/>
            <person name="Grangeiro T.B."/>
            <person name="Grattapaglia D."/>
            <person name="Grisard E.C."/>
            <person name="Hanna E.S."/>
            <person name="Jardim S.N."/>
            <person name="Laurino J."/>
            <person name="Leoi L.C.T."/>
            <person name="Lima L.F.A."/>
            <person name="Loureiro M.F."/>
            <person name="Lyra M.C.C.P."/>
            <person name="Madeira H.M.F."/>
            <person name="Manfio G.P."/>
            <person name="Maranhao A.Q."/>
            <person name="Martins W.S."/>
            <person name="di Mauro S.M.Z."/>
            <person name="de Medeiros S.R.B."/>
            <person name="Meissner R.V."/>
            <person name="Moreira M.A.M."/>
            <person name="Nascimento F.F."/>
            <person name="Nicolas M.F."/>
            <person name="Oliveira J.G."/>
            <person name="Oliveira S.C."/>
            <person name="Paixao R.F.C."/>
            <person name="Parente J.A."/>
            <person name="Pedrosa F.O."/>
            <person name="Pena S.D.J."/>
            <person name="Pereira J.O."/>
            <person name="Pereira M."/>
            <person name="Pinto L.S.R.C."/>
            <person name="Pinto L.S."/>
            <person name="Porto J.I.R."/>
            <person name="Potrich D.P."/>
            <person name="Ramalho-Neto C.E."/>
            <person name="Reis A.M.M."/>
            <person name="Rigo L.U."/>
            <person name="Rondinelli E."/>
            <person name="Santos E.B.P."/>
            <person name="Santos F.R."/>
            <person name="Schneider M.P.C."/>
            <person name="Seuanez H.N."/>
            <person name="Silva A.M.R."/>
            <person name="da Silva A.L.C."/>
            <person name="Silva D.W."/>
            <person name="Silva R."/>
            <person name="Simoes I.C."/>
            <person name="Simon D."/>
            <person name="Soares C.M.A."/>
            <person name="Soares R.B.A."/>
            <person name="Souza E.M."/>
            <person name="Souza K.R.L."/>
            <person name="Souza R.C."/>
            <person name="Steffens M.B.R."/>
            <person name="Steindel M."/>
            <person name="Teixeira S.R."/>
            <person name="Urmenyi T."/>
            <person name="Vettore A."/>
            <person name="Wassem R."/>
            <person name="Zaha A."/>
            <person name="Simpson A.J.G."/>
        </authorList>
    </citation>
    <scope>NUCLEOTIDE SEQUENCE [LARGE SCALE GENOMIC DNA]</scope>
    <source>
        <strain>ATCC 12472 / DSM 30191 / JCM 1249 / CCUG 213 / NBRC 12614 / NCIMB 9131 / NCTC 9757 / MK</strain>
    </source>
</reference>
<gene>
    <name type="ordered locus">CV_3485</name>
</gene>
<name>Y3485_CHRVO</name>
<organism>
    <name type="scientific">Chromobacterium violaceum (strain ATCC 12472 / DSM 30191 / JCM 1249 / CCUG 213 / NBRC 12614 / NCIMB 9131 / NCTC 9757 / MK)</name>
    <dbReference type="NCBI Taxonomy" id="243365"/>
    <lineage>
        <taxon>Bacteria</taxon>
        <taxon>Pseudomonadati</taxon>
        <taxon>Pseudomonadota</taxon>
        <taxon>Betaproteobacteria</taxon>
        <taxon>Neisseriales</taxon>
        <taxon>Chromobacteriaceae</taxon>
        <taxon>Chromobacterium</taxon>
    </lineage>
</organism>
<evidence type="ECO:0000255" key="1">
    <source>
        <dbReference type="HAMAP-Rule" id="MF_00010"/>
    </source>
</evidence>
<protein>
    <recommendedName>
        <fullName evidence="1">UPF0060 membrane protein CV_3485</fullName>
    </recommendedName>
</protein>
<feature type="chain" id="PRO_0000162328" description="UPF0060 membrane protein CV_3485">
    <location>
        <begin position="1"/>
        <end position="113"/>
    </location>
</feature>
<feature type="transmembrane region" description="Helical" evidence="1">
    <location>
        <begin position="12"/>
        <end position="32"/>
    </location>
</feature>
<feature type="transmembrane region" description="Helical" evidence="1">
    <location>
        <begin position="37"/>
        <end position="57"/>
    </location>
</feature>
<feature type="transmembrane region" description="Helical" evidence="1">
    <location>
        <begin position="67"/>
        <end position="87"/>
    </location>
</feature>
<feature type="transmembrane region" description="Helical" evidence="1">
    <location>
        <begin position="91"/>
        <end position="111"/>
    </location>
</feature>
<dbReference type="EMBL" id="AE016825">
    <property type="protein sequence ID" value="AAQ61146.1"/>
    <property type="molecule type" value="Genomic_DNA"/>
</dbReference>
<dbReference type="RefSeq" id="WP_011137032.1">
    <property type="nucleotide sequence ID" value="NC_005085.1"/>
</dbReference>
<dbReference type="SMR" id="Q7NSE1"/>
<dbReference type="KEGG" id="cvi:CV_3485"/>
<dbReference type="eggNOG" id="COG1742">
    <property type="taxonomic scope" value="Bacteria"/>
</dbReference>
<dbReference type="HOGENOM" id="CLU_117653_2_0_4"/>
<dbReference type="OrthoDB" id="123240at2"/>
<dbReference type="Proteomes" id="UP000001424">
    <property type="component" value="Chromosome"/>
</dbReference>
<dbReference type="GO" id="GO:0005886">
    <property type="term" value="C:plasma membrane"/>
    <property type="evidence" value="ECO:0007669"/>
    <property type="project" value="UniProtKB-SubCell"/>
</dbReference>
<dbReference type="HAMAP" id="MF_00010">
    <property type="entry name" value="UPF0060"/>
    <property type="match status" value="1"/>
</dbReference>
<dbReference type="InterPro" id="IPR003844">
    <property type="entry name" value="UPF0060"/>
</dbReference>
<dbReference type="NCBIfam" id="NF002586">
    <property type="entry name" value="PRK02237.1"/>
    <property type="match status" value="1"/>
</dbReference>
<dbReference type="PANTHER" id="PTHR36116">
    <property type="entry name" value="UPF0060 MEMBRANE PROTEIN YNFA"/>
    <property type="match status" value="1"/>
</dbReference>
<dbReference type="PANTHER" id="PTHR36116:SF1">
    <property type="entry name" value="UPF0060 MEMBRANE PROTEIN YNFA"/>
    <property type="match status" value="1"/>
</dbReference>
<dbReference type="Pfam" id="PF02694">
    <property type="entry name" value="UPF0060"/>
    <property type="match status" value="1"/>
</dbReference>
<dbReference type="SUPFAM" id="SSF103481">
    <property type="entry name" value="Multidrug resistance efflux transporter EmrE"/>
    <property type="match status" value="1"/>
</dbReference>